<keyword id="KW-0945">Host-virus interaction</keyword>
<keyword id="KW-1198">Viral budding</keyword>
<keyword id="KW-1187">Viral budding via the host ESCRT complexes</keyword>
<keyword id="KW-0468">Viral matrix protein</keyword>
<keyword id="KW-1188">Viral release from host cell</keyword>
<keyword id="KW-0946">Virion</keyword>
<proteinExistence type="inferred from homology"/>
<feature type="chain" id="PRO_0000442121" description="Gag polyprotein">
    <location>
        <begin position="1"/>
        <end position="453"/>
    </location>
</feature>
<feature type="chain" id="PRO_0000040818" description="Matrix protein p19">
    <location>
        <begin position="1"/>
        <end position="155"/>
    </location>
</feature>
<feature type="chain" id="PRO_0000442122" description="p2A">
    <location>
        <begin position="156"/>
        <end position="166"/>
    </location>
</feature>
<feature type="chain" id="PRO_0000442123" description="p2B">
    <location>
        <begin position="167"/>
        <end position="177"/>
    </location>
</feature>
<feature type="chain" id="PRO_0000040819" description="p10">
    <location>
        <begin position="178"/>
        <end position="239"/>
    </location>
</feature>
<feature type="chain" id="PRO_0000040820" description="Capsid protein p27, truncated">
    <location>
        <begin position="240"/>
        <end position="453"/>
    </location>
</feature>
<feature type="region of interest" description="Disordered" evidence="2">
    <location>
        <begin position="100"/>
        <end position="150"/>
    </location>
</feature>
<feature type="region of interest" description="Disordered" evidence="2">
    <location>
        <begin position="187"/>
        <end position="218"/>
    </location>
</feature>
<feature type="short sequence motif" description="PPXY motif" evidence="1">
    <location>
        <begin position="172"/>
        <end position="175"/>
    </location>
</feature>
<feature type="compositionally biased region" description="Basic and acidic residues" evidence="2">
    <location>
        <begin position="112"/>
        <end position="141"/>
    </location>
</feature>
<feature type="site" description="Cleavage; by viral protease p15" evidence="1">
    <location>
        <begin position="155"/>
        <end position="156"/>
    </location>
</feature>
<feature type="site" description="Cleavage; by viral protease p15" evidence="1">
    <location>
        <begin position="166"/>
        <end position="167"/>
    </location>
</feature>
<feature type="site" description="Cleavage; by viral protease p15" evidence="1">
    <location>
        <begin position="177"/>
        <end position="178"/>
    </location>
</feature>
<feature type="site" description="Cleavage; by viral protease p15" evidence="1">
    <location>
        <begin position="239"/>
        <end position="240"/>
    </location>
</feature>
<reference key="1">
    <citation type="journal article" date="1985" name="J. Virol.">
        <title>Nucleotide sequence of HBI, a novel recombinant MC29 derivative with altered pathogenic properties.</title>
        <authorList>
            <person name="Smith D.R."/>
            <person name="Vennstrom B."/>
            <person name="Hayman M.J."/>
            <person name="Enrietto P.J."/>
        </authorList>
    </citation>
    <scope>NUCLEOTIDE SEQUENCE [GENOMIC DNA]</scope>
</reference>
<organism>
    <name type="scientific">Avian myelocytomatosis virus HBI</name>
    <dbReference type="NCBI Taxonomy" id="11915"/>
    <lineage>
        <taxon>Viruses</taxon>
        <taxon>Riboviria</taxon>
        <taxon>Pararnavirae</taxon>
        <taxon>Artverviricota</taxon>
        <taxon>Revtraviricetes</taxon>
        <taxon>Ortervirales</taxon>
        <taxon>Retroviridae</taxon>
    </lineage>
</organism>
<name>GAG_AVIMD</name>
<dbReference type="EMBL" id="M11784">
    <property type="protein sequence ID" value="AAA42406.1"/>
    <property type="molecule type" value="Genomic_DNA"/>
</dbReference>
<dbReference type="PIR" id="A03924">
    <property type="entry name" value="FOFVHB"/>
</dbReference>
<dbReference type="SMR" id="P06444"/>
<dbReference type="GO" id="GO:0044423">
    <property type="term" value="C:virion component"/>
    <property type="evidence" value="ECO:0007669"/>
    <property type="project" value="UniProtKB-KW"/>
</dbReference>
<dbReference type="GO" id="GO:0039660">
    <property type="term" value="F:structural constituent of virion"/>
    <property type="evidence" value="ECO:0007669"/>
    <property type="project" value="UniProtKB-KW"/>
</dbReference>
<dbReference type="GO" id="GO:0039702">
    <property type="term" value="P:viral budding via host ESCRT complex"/>
    <property type="evidence" value="ECO:0007669"/>
    <property type="project" value="UniProtKB-KW"/>
</dbReference>
<dbReference type="FunFam" id="1.10.375.10:FF:000003">
    <property type="entry name" value="Gag polyprotein"/>
    <property type="match status" value="1"/>
</dbReference>
<dbReference type="Gene3D" id="1.10.1200.30">
    <property type="match status" value="1"/>
</dbReference>
<dbReference type="Gene3D" id="1.10.375.10">
    <property type="entry name" value="Human Immunodeficiency Virus Type 1 Capsid Protein"/>
    <property type="match status" value="1"/>
</dbReference>
<dbReference type="Gene3D" id="1.10.150.90">
    <property type="entry name" value="Immunodeficiency lentiviruses, gag gene matrix protein p17"/>
    <property type="match status" value="1"/>
</dbReference>
<dbReference type="InterPro" id="IPR004028">
    <property type="entry name" value="Gag_M"/>
</dbReference>
<dbReference type="InterPro" id="IPR012344">
    <property type="entry name" value="Matrix_HIV/RSV_N"/>
</dbReference>
<dbReference type="InterPro" id="IPR050195">
    <property type="entry name" value="Primate_lentivir_Gag_pol-like"/>
</dbReference>
<dbReference type="InterPro" id="IPR008916">
    <property type="entry name" value="Retrov_capsid_C"/>
</dbReference>
<dbReference type="InterPro" id="IPR008919">
    <property type="entry name" value="Retrov_capsid_N"/>
</dbReference>
<dbReference type="InterPro" id="IPR010999">
    <property type="entry name" value="Retrovr_matrix"/>
</dbReference>
<dbReference type="PANTHER" id="PTHR40389">
    <property type="entry name" value="ENDOGENOUS RETROVIRUS GROUP K MEMBER 24 GAG POLYPROTEIN-RELATED"/>
    <property type="match status" value="1"/>
</dbReference>
<dbReference type="PANTHER" id="PTHR40389:SF3">
    <property type="entry name" value="IGE-BINDING PROTEIN"/>
    <property type="match status" value="1"/>
</dbReference>
<dbReference type="Pfam" id="PF00607">
    <property type="entry name" value="Gag_p24"/>
    <property type="match status" value="1"/>
</dbReference>
<dbReference type="Pfam" id="PF02813">
    <property type="entry name" value="Retro_M"/>
    <property type="match status" value="1"/>
</dbReference>
<dbReference type="SUPFAM" id="SSF47836">
    <property type="entry name" value="Retroviral matrix proteins"/>
    <property type="match status" value="1"/>
</dbReference>
<dbReference type="SUPFAM" id="SSF47353">
    <property type="entry name" value="Retrovirus capsid dimerization domain-like"/>
    <property type="match status" value="1"/>
</dbReference>
<dbReference type="SUPFAM" id="SSF47943">
    <property type="entry name" value="Retrovirus capsid protein, N-terminal core domain"/>
    <property type="match status" value="1"/>
</dbReference>
<gene>
    <name type="primary">gag</name>
</gene>
<comment type="subcellular location">
    <molecule>Matrix protein p19</molecule>
    <subcellularLocation>
        <location evidence="3">Virion</location>
    </subcellularLocation>
</comment>
<comment type="domain">
    <molecule>Gag polyprotein</molecule>
    <text evidence="3">Late-budding domains (L domains) are short sequence motifs essential for viral particle budding. They recruit proteins of the host ESCRT machinery (Endosomal Sorting Complex Required for Transport) or ESCRT-associated proteins. Gag contains one L domain: a PPXY motif which potentially interacts with the WW domain 3 of NEDD4 E3 ubiquitin ligase (Potential).</text>
</comment>
<comment type="PTM">
    <molecule>Gag polyprotein</molecule>
    <text evidence="1">Specific enzymatic cleavages in vivo yield mature proteins.</text>
</comment>
<comment type="miscellaneous">
    <molecule>Gag polyprotein</molecule>
    <text evidence="3">This protein is synthesized as a Gag-vMyc polyprotein.</text>
</comment>
<sequence>MEAVIKVISSACKTYCGKTSPSKKEIGAMLSLLQKEGLLMSPSDLYSPGSWDPITAALSQRAMVLGKSGELKTWGLVLGALKAAREEQVTSEQAKFWLGLGGGRVSPPGPESIEKPATERRIDKGEEVGETTVQRDAKMAPEETATPKTVGTSCYHCGTAIGCNCATASAPPPPYVGSGLYPSLAGVGELQGQGGDTPRGAEQPRAEPGHAGLAPGPALTDWARVGEELASTGPPVVAMPVVIKTEGPAWTPLEPKLITRLADTVRAKGLRSPITMAEVEALMSSPLLPHDVTNLMRVILGPAPYALWMDAWGVQLQTVIAAATRDPRHPANGQGRGERTNLDRLKGLADGMVGNPQGQAALLRPGELVAITASALQAFREVARLAEPAGPWADITQGPSESFVDFANRLIKAVEGSDLPPSARAPVIIDCFRQKSQPDIQQLIRAAPSTVHG</sequence>
<evidence type="ECO:0000250" key="1">
    <source>
        <dbReference type="UniProtKB" id="P03322"/>
    </source>
</evidence>
<evidence type="ECO:0000256" key="2">
    <source>
        <dbReference type="SAM" id="MobiDB-lite"/>
    </source>
</evidence>
<evidence type="ECO:0000305" key="3"/>
<protein>
    <recommendedName>
        <fullName>Gag polyprotein</fullName>
    </recommendedName>
    <component>
        <recommendedName>
            <fullName>Matrix protein p19</fullName>
        </recommendedName>
    </component>
    <component>
        <recommendedName>
            <fullName>p2A</fullName>
        </recommendedName>
    </component>
    <component>
        <recommendedName>
            <fullName>p2B</fullName>
        </recommendedName>
    </component>
    <component>
        <recommendedName>
            <fullName>p10</fullName>
        </recommendedName>
    </component>
    <component>
        <recommendedName>
            <fullName>Capsid protein p27, truncated</fullName>
        </recommendedName>
    </component>
</protein>
<organismHost>
    <name type="scientific">Galliformes</name>
    <dbReference type="NCBI Taxonomy" id="8976"/>
</organismHost>
<accession>P06444</accession>